<dbReference type="EMBL" id="AY043467">
    <property type="protein sequence ID" value="AAK95329.1"/>
    <property type="molecule type" value="Genomic_DNA"/>
</dbReference>
<dbReference type="SMR" id="Q8GFE2"/>
<dbReference type="GO" id="GO:0005576">
    <property type="term" value="C:extracellular region"/>
    <property type="evidence" value="ECO:0007669"/>
    <property type="project" value="UniProtKB-SubCell"/>
</dbReference>
<dbReference type="GO" id="GO:0009275">
    <property type="term" value="C:Gram-positive-bacterium-type cell wall"/>
    <property type="evidence" value="ECO:0000314"/>
    <property type="project" value="UniProtKB"/>
</dbReference>
<dbReference type="GO" id="GO:0005886">
    <property type="term" value="C:plasma membrane"/>
    <property type="evidence" value="ECO:0007669"/>
    <property type="project" value="UniProtKB-SubCell"/>
</dbReference>
<dbReference type="GO" id="GO:0031419">
    <property type="term" value="F:cobalamin binding"/>
    <property type="evidence" value="ECO:0007669"/>
    <property type="project" value="UniProtKB-KW"/>
</dbReference>
<dbReference type="GO" id="GO:0050781">
    <property type="term" value="F:ortho-trichlorophenol reductive dehalogenase activity"/>
    <property type="evidence" value="ECO:0000314"/>
    <property type="project" value="UniProtKB"/>
</dbReference>
<dbReference type="GO" id="GO:0046193">
    <property type="term" value="P:anaerobic phenol-containing compound catabolic process"/>
    <property type="evidence" value="ECO:0000314"/>
    <property type="project" value="UniProtKB"/>
</dbReference>
<dbReference type="CDD" id="cd00118">
    <property type="entry name" value="LysM"/>
    <property type="match status" value="1"/>
</dbReference>
<dbReference type="Gene3D" id="3.90.1010.20">
    <property type="match status" value="1"/>
</dbReference>
<dbReference type="Gene3D" id="3.10.350.10">
    <property type="entry name" value="LysM domain"/>
    <property type="match status" value="1"/>
</dbReference>
<dbReference type="InterPro" id="IPR018392">
    <property type="entry name" value="LysM_dom"/>
</dbReference>
<dbReference type="InterPro" id="IPR036779">
    <property type="entry name" value="LysM_dom_sf"/>
</dbReference>
<dbReference type="Pfam" id="PF01476">
    <property type="entry name" value="LysM"/>
    <property type="match status" value="1"/>
</dbReference>
<dbReference type="SMART" id="SM00257">
    <property type="entry name" value="LysM"/>
    <property type="match status" value="1"/>
</dbReference>
<dbReference type="SUPFAM" id="SSF54106">
    <property type="entry name" value="LysM domain"/>
    <property type="match status" value="1"/>
</dbReference>
<dbReference type="PROSITE" id="PS51782">
    <property type="entry name" value="LYSM"/>
    <property type="match status" value="1"/>
</dbReference>
<proteinExistence type="evidence at protein level"/>
<protein>
    <recommendedName>
        <fullName>Chlorophenol reductase</fullName>
    </recommendedName>
    <alternativeName>
        <fullName>Ortho-chlorophenol reductive dehalogenase</fullName>
    </alternativeName>
</protein>
<feature type="signal peptide" evidence="2">
    <location>
        <begin position="1"/>
        <end position="24"/>
    </location>
</feature>
<feature type="chain" id="PRO_0000020988" description="Chlorophenol reductase">
    <location>
        <begin position="25"/>
        <end position="327"/>
    </location>
</feature>
<feature type="domain" description="LysM" evidence="1">
    <location>
        <begin position="65"/>
        <end position="110"/>
    </location>
</feature>
<reference evidence="4" key="1">
    <citation type="journal article" date="2003" name="Biochem. J.">
        <title>Purification, cloning and sequencing of an enzyme mediating the reductive dechlorination of 2,4,6-trichlorophenol from Desulfitobacterium frappieri PCP-1.</title>
        <authorList>
            <person name="Boyer A."/>
            <person name="Page-Belanger R."/>
            <person name="Saucier M."/>
            <person name="Villemur R."/>
            <person name="Lepine F."/>
            <person name="Juteau P."/>
            <person name="Beaudet R."/>
        </authorList>
    </citation>
    <scope>NUCLEOTIDE SEQUENCE [GENOMIC DNA]</scope>
    <scope>PROTEIN SEQUENCE OF 25-39 AND 116-124</scope>
    <scope>FUNCTION</scope>
    <scope>COFACTOR</scope>
    <scope>ACTIVITY REGULATION</scope>
    <scope>SUBCELLULAR LOCATION</scope>
    <scope>INDUCTION</scope>
    <scope>MASS SPECTROMETRY</scope>
    <source>
        <strain evidence="2">ATCC 700357 / PCP-1</strain>
    </source>
</reference>
<accession>Q8GFE2</accession>
<organism>
    <name type="scientific">Desulfitobacterium hafniense</name>
    <name type="common">Desulfitobacterium frappieri</name>
    <dbReference type="NCBI Taxonomy" id="49338"/>
    <lineage>
        <taxon>Bacteria</taxon>
        <taxon>Bacillati</taxon>
        <taxon>Bacillota</taxon>
        <taxon>Clostridia</taxon>
        <taxon>Eubacteriales</taxon>
        <taxon>Desulfitobacteriaceae</taxon>
        <taxon>Desulfitobacterium</taxon>
    </lineage>
</organism>
<comment type="function">
    <text evidence="2">Reductive dechlorination of ortho-chlorophenols. Dechlorinates in the ortho position with respect to the hydroxyl group.</text>
</comment>
<comment type="cofactor">
    <cofactor evidence="2">
        <name>cob(I)alamin</name>
        <dbReference type="ChEBI" id="CHEBI:60488"/>
    </cofactor>
</comment>
<comment type="activity regulation">
    <text evidence="2">Inhibited by sulfide and to a lesser extent by nitrite.</text>
</comment>
<comment type="subcellular location">
    <subcellularLocation>
        <location evidence="2">Secreted</location>
    </subcellularLocation>
    <subcellularLocation>
        <location evidence="2">Secreted</location>
        <location evidence="2">Cell wall</location>
    </subcellularLocation>
    <subcellularLocation>
        <location evidence="2">Cell membrane</location>
    </subcellularLocation>
    <text>Associated with the cell membrane. Probably binds to peptidoglycans of the cell membrane and cell wall.</text>
</comment>
<comment type="induction">
    <text evidence="2">By 2,4,6-trichlorophenol.</text>
</comment>
<comment type="domain">
    <text evidence="3">LysM domains are thought to be involved in peptidoglycan binding.</text>
</comment>
<comment type="mass spectrometry" mass="33800.0" method="Electrospray" evidence="2"/>
<name>CPLR_DESHA</name>
<evidence type="ECO:0000255" key="1">
    <source>
        <dbReference type="PROSITE-ProRule" id="PRU01118"/>
    </source>
</evidence>
<evidence type="ECO:0000269" key="2">
    <source>
    </source>
</evidence>
<evidence type="ECO:0000303" key="3">
    <source>
    </source>
</evidence>
<evidence type="ECO:0000305" key="4"/>
<keyword id="KW-0058">Aromatic hydrocarbons catabolism</keyword>
<keyword id="KW-1003">Cell membrane</keyword>
<keyword id="KW-0134">Cell wall</keyword>
<keyword id="KW-0846">Cobalamin</keyword>
<keyword id="KW-0170">Cobalt</keyword>
<keyword id="KW-0903">Direct protein sequencing</keyword>
<keyword id="KW-0472">Membrane</keyword>
<keyword id="KW-0964">Secreted</keyword>
<keyword id="KW-0732">Signal</keyword>
<sequence length="327" mass="35456">MKKTLGIILSISLAFSVLALPIFAAVDTTTSATVEAATPAAPATPAATAPAAAPSVDTSKIAAGTYYTVVSGDFFWQIAAKHGLTIDALAKLNPQIKNVNLIFPGQKILVKAEEAAAASTSTSTAAVAPAAKKLYQGIGMAANYRDNTARQKDHDNLNITTVAALFDDAGKIVKLQFDVVEILPDMFPGWMDPEAADKSFYKDAQANGFNWETKKEEGDAYGMKASAVSGKEWWEQMNFYEEYFKGKTVAEVQDWFAKYCDANGRPYKMAYPEKLTDADKAKVATFTEAEKKMLVDVTTGATMSLQDPHSRFIDALVKAYEVRKEVK</sequence>